<keyword id="KW-0067">ATP-binding</keyword>
<keyword id="KW-0963">Cytoplasm</keyword>
<keyword id="KW-0460">Magnesium</keyword>
<keyword id="KW-0464">Manganese</keyword>
<keyword id="KW-0479">Metal-binding</keyword>
<keyword id="KW-0507">mRNA processing</keyword>
<keyword id="KW-0547">Nucleotide-binding</keyword>
<keyword id="KW-0539">Nucleus</keyword>
<keyword id="KW-1185">Reference proteome</keyword>
<keyword id="KW-0694">RNA-binding</keyword>
<keyword id="KW-0808">Transferase</keyword>
<organism>
    <name type="scientific">Schizosaccharomyces pombe (strain 972 / ATCC 24843)</name>
    <name type="common">Fission yeast</name>
    <dbReference type="NCBI Taxonomy" id="284812"/>
    <lineage>
        <taxon>Eukaryota</taxon>
        <taxon>Fungi</taxon>
        <taxon>Dikarya</taxon>
        <taxon>Ascomycota</taxon>
        <taxon>Taphrinomycotina</taxon>
        <taxon>Schizosaccharomycetes</taxon>
        <taxon>Schizosaccharomycetales</taxon>
        <taxon>Schizosaccharomycetaceae</taxon>
        <taxon>Schizosaccharomyces</taxon>
    </lineage>
</organism>
<reference key="1">
    <citation type="journal article" date="2002" name="Nature">
        <title>The genome sequence of Schizosaccharomyces pombe.</title>
        <authorList>
            <person name="Wood V."/>
            <person name="Gwilliam R."/>
            <person name="Rajandream M.A."/>
            <person name="Lyne M.H."/>
            <person name="Lyne R."/>
            <person name="Stewart A."/>
            <person name="Sgouros J.G."/>
            <person name="Peat N."/>
            <person name="Hayles J."/>
            <person name="Baker S.G."/>
            <person name="Basham D."/>
            <person name="Bowman S."/>
            <person name="Brooks K."/>
            <person name="Brown D."/>
            <person name="Brown S."/>
            <person name="Chillingworth T."/>
            <person name="Churcher C.M."/>
            <person name="Collins M."/>
            <person name="Connor R."/>
            <person name="Cronin A."/>
            <person name="Davis P."/>
            <person name="Feltwell T."/>
            <person name="Fraser A."/>
            <person name="Gentles S."/>
            <person name="Goble A."/>
            <person name="Hamlin N."/>
            <person name="Harris D.E."/>
            <person name="Hidalgo J."/>
            <person name="Hodgson G."/>
            <person name="Holroyd S."/>
            <person name="Hornsby T."/>
            <person name="Howarth S."/>
            <person name="Huckle E.J."/>
            <person name="Hunt S."/>
            <person name="Jagels K."/>
            <person name="James K.D."/>
            <person name="Jones L."/>
            <person name="Jones M."/>
            <person name="Leather S."/>
            <person name="McDonald S."/>
            <person name="McLean J."/>
            <person name="Mooney P."/>
            <person name="Moule S."/>
            <person name="Mungall K.L."/>
            <person name="Murphy L.D."/>
            <person name="Niblett D."/>
            <person name="Odell C."/>
            <person name="Oliver K."/>
            <person name="O'Neil S."/>
            <person name="Pearson D."/>
            <person name="Quail M.A."/>
            <person name="Rabbinowitsch E."/>
            <person name="Rutherford K.M."/>
            <person name="Rutter S."/>
            <person name="Saunders D."/>
            <person name="Seeger K."/>
            <person name="Sharp S."/>
            <person name="Skelton J."/>
            <person name="Simmonds M.N."/>
            <person name="Squares R."/>
            <person name="Squares S."/>
            <person name="Stevens K."/>
            <person name="Taylor K."/>
            <person name="Taylor R.G."/>
            <person name="Tivey A."/>
            <person name="Walsh S.V."/>
            <person name="Warren T."/>
            <person name="Whitehead S."/>
            <person name="Woodward J.R."/>
            <person name="Volckaert G."/>
            <person name="Aert R."/>
            <person name="Robben J."/>
            <person name="Grymonprez B."/>
            <person name="Weltjens I."/>
            <person name="Vanstreels E."/>
            <person name="Rieger M."/>
            <person name="Schaefer M."/>
            <person name="Mueller-Auer S."/>
            <person name="Gabel C."/>
            <person name="Fuchs M."/>
            <person name="Duesterhoeft A."/>
            <person name="Fritzc C."/>
            <person name="Holzer E."/>
            <person name="Moestl D."/>
            <person name="Hilbert H."/>
            <person name="Borzym K."/>
            <person name="Langer I."/>
            <person name="Beck A."/>
            <person name="Lehrach H."/>
            <person name="Reinhardt R."/>
            <person name="Pohl T.M."/>
            <person name="Eger P."/>
            <person name="Zimmermann W."/>
            <person name="Wedler H."/>
            <person name="Wambutt R."/>
            <person name="Purnelle B."/>
            <person name="Goffeau A."/>
            <person name="Cadieu E."/>
            <person name="Dreano S."/>
            <person name="Gloux S."/>
            <person name="Lelaure V."/>
            <person name="Mottier S."/>
            <person name="Galibert F."/>
            <person name="Aves S.J."/>
            <person name="Xiang Z."/>
            <person name="Hunt C."/>
            <person name="Moore K."/>
            <person name="Hurst S.M."/>
            <person name="Lucas M."/>
            <person name="Rochet M."/>
            <person name="Gaillardin C."/>
            <person name="Tallada V.A."/>
            <person name="Garzon A."/>
            <person name="Thode G."/>
            <person name="Daga R.R."/>
            <person name="Cruzado L."/>
            <person name="Jimenez J."/>
            <person name="Sanchez M."/>
            <person name="del Rey F."/>
            <person name="Benito J."/>
            <person name="Dominguez A."/>
            <person name="Revuelta J.L."/>
            <person name="Moreno S."/>
            <person name="Armstrong J."/>
            <person name="Forsburg S.L."/>
            <person name="Cerutti L."/>
            <person name="Lowe T."/>
            <person name="McCombie W.R."/>
            <person name="Paulsen I."/>
            <person name="Potashkin J."/>
            <person name="Shpakovski G.V."/>
            <person name="Ussery D."/>
            <person name="Barrell B.G."/>
            <person name="Nurse P."/>
        </authorList>
    </citation>
    <scope>NUCLEOTIDE SEQUENCE [LARGE SCALE GENOMIC DNA]</scope>
    <source>
        <strain>972 / ATCC 24843</strain>
    </source>
</reference>
<reference key="2">
    <citation type="journal article" date="2006" name="Nat. Biotechnol.">
        <title>ORFeome cloning and global analysis of protein localization in the fission yeast Schizosaccharomyces pombe.</title>
        <authorList>
            <person name="Matsuyama A."/>
            <person name="Arai R."/>
            <person name="Yashiroda Y."/>
            <person name="Shirai A."/>
            <person name="Kamata A."/>
            <person name="Sekido S."/>
            <person name="Kobayashi Y."/>
            <person name="Hashimoto A."/>
            <person name="Hamamoto M."/>
            <person name="Hiraoka Y."/>
            <person name="Horinouchi S."/>
            <person name="Yoshida M."/>
        </authorList>
    </citation>
    <scope>SUBCELLULAR LOCATION [LARGE SCALE ANALYSIS]</scope>
</reference>
<evidence type="ECO:0000250" key="1"/>
<evidence type="ECO:0000256" key="2">
    <source>
        <dbReference type="SAM" id="MobiDB-lite"/>
    </source>
</evidence>
<evidence type="ECO:0000269" key="3">
    <source>
    </source>
</evidence>
<evidence type="ECO:0000305" key="4"/>
<feature type="chain" id="PRO_0000256154" description="Poly(A) RNA polymerase cid11">
    <location>
        <begin position="1"/>
        <end position="478"/>
    </location>
</feature>
<feature type="domain" description="PAP-associated">
    <location>
        <begin position="263"/>
        <end position="317"/>
    </location>
</feature>
<feature type="region of interest" description="Disordered" evidence="2">
    <location>
        <begin position="428"/>
        <end position="447"/>
    </location>
</feature>
<feature type="binding site" evidence="1">
    <location>
        <position position="106"/>
    </location>
    <ligand>
        <name>Mg(2+)</name>
        <dbReference type="ChEBI" id="CHEBI:18420"/>
        <note>catalytic</note>
    </ligand>
</feature>
<feature type="binding site" evidence="1">
    <location>
        <position position="108"/>
    </location>
    <ligand>
        <name>Mg(2+)</name>
        <dbReference type="ChEBI" id="CHEBI:18420"/>
        <note>catalytic</note>
    </ligand>
</feature>
<gene>
    <name type="primary">cid11</name>
    <name type="ORF">SPBC1685.06</name>
</gene>
<dbReference type="EC" id="2.7.7.19"/>
<dbReference type="EMBL" id="CU329671">
    <property type="protein sequence ID" value="CAA20054.1"/>
    <property type="molecule type" value="Genomic_DNA"/>
</dbReference>
<dbReference type="PIR" id="T39522">
    <property type="entry name" value="T39522"/>
</dbReference>
<dbReference type="RefSeq" id="NP_595210.1">
    <property type="nucleotide sequence ID" value="NM_001021117.2"/>
</dbReference>
<dbReference type="SMR" id="O74326"/>
<dbReference type="FunCoup" id="O74326">
    <property type="interactions" value="63"/>
</dbReference>
<dbReference type="STRING" id="284812.O74326"/>
<dbReference type="SwissPalm" id="O74326"/>
<dbReference type="PaxDb" id="4896-SPBC1685.06.1"/>
<dbReference type="EnsemblFungi" id="SPBC1685.06.1">
    <property type="protein sequence ID" value="SPBC1685.06.1:pep"/>
    <property type="gene ID" value="SPBC1685.06"/>
</dbReference>
<dbReference type="GeneID" id="2539762"/>
<dbReference type="KEGG" id="spo:2539762"/>
<dbReference type="PomBase" id="SPBC1685.06">
    <property type="gene designation" value="cid11"/>
</dbReference>
<dbReference type="VEuPathDB" id="FungiDB:SPBC1685.06"/>
<dbReference type="eggNOG" id="KOG2277">
    <property type="taxonomic scope" value="Eukaryota"/>
</dbReference>
<dbReference type="HOGENOM" id="CLU_033943_0_0_1"/>
<dbReference type="InParanoid" id="O74326"/>
<dbReference type="OMA" id="RTYAYAD"/>
<dbReference type="PhylomeDB" id="O74326"/>
<dbReference type="PRO" id="PR:O74326"/>
<dbReference type="Proteomes" id="UP000002485">
    <property type="component" value="Chromosome II"/>
</dbReference>
<dbReference type="GO" id="GO:0005829">
    <property type="term" value="C:cytosol"/>
    <property type="evidence" value="ECO:0007005"/>
    <property type="project" value="PomBase"/>
</dbReference>
<dbReference type="GO" id="GO:0005634">
    <property type="term" value="C:nucleus"/>
    <property type="evidence" value="ECO:0007005"/>
    <property type="project" value="PomBase"/>
</dbReference>
<dbReference type="GO" id="GO:0005524">
    <property type="term" value="F:ATP binding"/>
    <property type="evidence" value="ECO:0007669"/>
    <property type="project" value="UniProtKB-KW"/>
</dbReference>
<dbReference type="GO" id="GO:0046872">
    <property type="term" value="F:metal ion binding"/>
    <property type="evidence" value="ECO:0007669"/>
    <property type="project" value="UniProtKB-KW"/>
</dbReference>
<dbReference type="GO" id="GO:0016779">
    <property type="term" value="F:nucleotidyltransferase activity"/>
    <property type="evidence" value="ECO:0000318"/>
    <property type="project" value="GO_Central"/>
</dbReference>
<dbReference type="GO" id="GO:1990817">
    <property type="term" value="F:poly(A) RNA polymerase activity"/>
    <property type="evidence" value="ECO:0007669"/>
    <property type="project" value="UniProtKB-EC"/>
</dbReference>
<dbReference type="GO" id="GO:0003723">
    <property type="term" value="F:RNA binding"/>
    <property type="evidence" value="ECO:0007669"/>
    <property type="project" value="UniProtKB-KW"/>
</dbReference>
<dbReference type="GO" id="GO:0006397">
    <property type="term" value="P:mRNA processing"/>
    <property type="evidence" value="ECO:0007669"/>
    <property type="project" value="UniProtKB-KW"/>
</dbReference>
<dbReference type="GO" id="GO:0031123">
    <property type="term" value="P:RNA 3'-end processing"/>
    <property type="evidence" value="ECO:0000318"/>
    <property type="project" value="GO_Central"/>
</dbReference>
<dbReference type="GO" id="GO:0034472">
    <property type="term" value="P:snRNA 3'-end processing"/>
    <property type="evidence" value="ECO:0000250"/>
    <property type="project" value="PomBase"/>
</dbReference>
<dbReference type="CDD" id="cd05402">
    <property type="entry name" value="NT_PAP_TUTase"/>
    <property type="match status" value="1"/>
</dbReference>
<dbReference type="FunFam" id="3.30.460.10:FF:000061">
    <property type="entry name" value="Poly(A) RNA polymerase gld-2"/>
    <property type="match status" value="1"/>
</dbReference>
<dbReference type="Gene3D" id="1.10.1410.10">
    <property type="match status" value="1"/>
</dbReference>
<dbReference type="Gene3D" id="3.30.460.10">
    <property type="entry name" value="Beta Polymerase, domain 2"/>
    <property type="match status" value="1"/>
</dbReference>
<dbReference type="InterPro" id="IPR054708">
    <property type="entry name" value="MTPAP-like_central"/>
</dbReference>
<dbReference type="InterPro" id="IPR043519">
    <property type="entry name" value="NT_sf"/>
</dbReference>
<dbReference type="InterPro" id="IPR002058">
    <property type="entry name" value="PAP_assoc"/>
</dbReference>
<dbReference type="PANTHER" id="PTHR12271">
    <property type="entry name" value="POLY A POLYMERASE CID PAP -RELATED"/>
    <property type="match status" value="1"/>
</dbReference>
<dbReference type="PANTHER" id="PTHR12271:SF113">
    <property type="entry name" value="POLY(A) RNA POLYMERASE CID11"/>
    <property type="match status" value="1"/>
</dbReference>
<dbReference type="Pfam" id="PF22600">
    <property type="entry name" value="MTPAP-like_central"/>
    <property type="match status" value="1"/>
</dbReference>
<dbReference type="Pfam" id="PF03828">
    <property type="entry name" value="PAP_assoc"/>
    <property type="match status" value="1"/>
</dbReference>
<dbReference type="SUPFAM" id="SSF81301">
    <property type="entry name" value="Nucleotidyltransferase"/>
    <property type="match status" value="1"/>
</dbReference>
<dbReference type="SUPFAM" id="SSF81631">
    <property type="entry name" value="PAP/OAS1 substrate-binding domain"/>
    <property type="match status" value="1"/>
</dbReference>
<accession>O74326</accession>
<sequence length="478" mass="54543">MELLTFTCCPFEGQMQQKKRRFDANLVQLQESEHRNDQINETVDAELTNECWKLYMRLKPSNEEVSRRQQFVDKLRTILSTEIKDAKLDLFVFGSTENNLAIQQSDVDVCIITNGSKYLNSTCQLAQLLYSYGMKQIVCVSRARVPIVKIWDPQFDIHCDLNINNDVAKINTKMLRLFVSIDPRVRPLGLIIKYWAKQRALCDAAGSGTITSYTISCMLVNFLQTRNPPILPAMLDLMSNDDNKMFVDDIVGFKEKATLNKTSLGRLLIDFFYYYGFSFNYLDSVVSVRSGTVLNKQEKGWAMEVNNSLCVEEPFNTARNLANTADNPSVKGLQSEFQRAFRLMSENNACERLCKICEEYQFLDITNEANYGNTNTPFNTAYESFGCNHTVLPEAAAYPKPYYPPQITLSDGGNMNFLYYIPDESNHQSYENKANRDSDFQGQTSLTQGSAPPWHYIPCQSWLVWYPSEDASNPASGN</sequence>
<protein>
    <recommendedName>
        <fullName>Poly(A) RNA polymerase cid11</fullName>
        <shortName>PAP</shortName>
        <ecNumber>2.7.7.19</ecNumber>
    </recommendedName>
    <alternativeName>
        <fullName>Caffeine-induced death protein 11</fullName>
    </alternativeName>
    <alternativeName>
        <fullName>Polynucleotide adenylyltransferase cid11</fullName>
    </alternativeName>
</protein>
<comment type="catalytic activity">
    <reaction>
        <text>RNA(n) + ATP = RNA(n)-3'-adenine ribonucleotide + diphosphate</text>
        <dbReference type="Rhea" id="RHEA:11332"/>
        <dbReference type="Rhea" id="RHEA-COMP:14527"/>
        <dbReference type="Rhea" id="RHEA-COMP:17347"/>
        <dbReference type="ChEBI" id="CHEBI:30616"/>
        <dbReference type="ChEBI" id="CHEBI:33019"/>
        <dbReference type="ChEBI" id="CHEBI:140395"/>
        <dbReference type="ChEBI" id="CHEBI:173115"/>
        <dbReference type="EC" id="2.7.7.19"/>
    </reaction>
</comment>
<comment type="cofactor">
    <cofactor evidence="1">
        <name>Mg(2+)</name>
        <dbReference type="ChEBI" id="CHEBI:18420"/>
    </cofactor>
    <cofactor evidence="1">
        <name>Mn(2+)</name>
        <dbReference type="ChEBI" id="CHEBI:29035"/>
    </cofactor>
</comment>
<comment type="subcellular location">
    <subcellularLocation>
        <location evidence="3">Cytoplasm</location>
    </subcellularLocation>
    <subcellularLocation>
        <location evidence="3">Nucleus</location>
    </subcellularLocation>
</comment>
<comment type="similarity">
    <text evidence="4">Belongs to the DNA polymerase type-B-like family.</text>
</comment>
<name>CID11_SCHPO</name>
<proteinExistence type="inferred from homology"/>